<gene>
    <name evidence="1" type="primary">recX</name>
    <name type="ordered locus">SAHV_1858</name>
</gene>
<feature type="chain" id="PRO_1000065207" description="Regulatory protein RecX">
    <location>
        <begin position="1"/>
        <end position="272"/>
    </location>
</feature>
<organism>
    <name type="scientific">Staphylococcus aureus (strain Mu3 / ATCC 700698)</name>
    <dbReference type="NCBI Taxonomy" id="418127"/>
    <lineage>
        <taxon>Bacteria</taxon>
        <taxon>Bacillati</taxon>
        <taxon>Bacillota</taxon>
        <taxon>Bacilli</taxon>
        <taxon>Bacillales</taxon>
        <taxon>Staphylococcaceae</taxon>
        <taxon>Staphylococcus</taxon>
    </lineage>
</organism>
<dbReference type="EMBL" id="AP009324">
    <property type="protein sequence ID" value="BAF78741.1"/>
    <property type="molecule type" value="Genomic_DNA"/>
</dbReference>
<dbReference type="RefSeq" id="WP_001124422.1">
    <property type="nucleotide sequence ID" value="NC_009782.1"/>
</dbReference>
<dbReference type="SMR" id="A7X3Z1"/>
<dbReference type="KEGG" id="saw:SAHV_1858"/>
<dbReference type="HOGENOM" id="CLU_066607_4_0_9"/>
<dbReference type="GO" id="GO:0005737">
    <property type="term" value="C:cytoplasm"/>
    <property type="evidence" value="ECO:0007669"/>
    <property type="project" value="UniProtKB-SubCell"/>
</dbReference>
<dbReference type="GO" id="GO:0006282">
    <property type="term" value="P:regulation of DNA repair"/>
    <property type="evidence" value="ECO:0007669"/>
    <property type="project" value="UniProtKB-UniRule"/>
</dbReference>
<dbReference type="Gene3D" id="1.10.10.10">
    <property type="entry name" value="Winged helix-like DNA-binding domain superfamily/Winged helix DNA-binding domain"/>
    <property type="match status" value="4"/>
</dbReference>
<dbReference type="HAMAP" id="MF_01114">
    <property type="entry name" value="RecX"/>
    <property type="match status" value="1"/>
</dbReference>
<dbReference type="InterPro" id="IPR053926">
    <property type="entry name" value="RecX_HTH_1st"/>
</dbReference>
<dbReference type="InterPro" id="IPR053925">
    <property type="entry name" value="RecX_HTH_3rd"/>
</dbReference>
<dbReference type="InterPro" id="IPR003783">
    <property type="entry name" value="Regulatory_RecX"/>
</dbReference>
<dbReference type="InterPro" id="IPR036388">
    <property type="entry name" value="WH-like_DNA-bd_sf"/>
</dbReference>
<dbReference type="NCBIfam" id="NF010733">
    <property type="entry name" value="PRK14135.1"/>
    <property type="match status" value="1"/>
</dbReference>
<dbReference type="PANTHER" id="PTHR33602">
    <property type="entry name" value="REGULATORY PROTEIN RECX FAMILY PROTEIN"/>
    <property type="match status" value="1"/>
</dbReference>
<dbReference type="PANTHER" id="PTHR33602:SF1">
    <property type="entry name" value="REGULATORY PROTEIN RECX FAMILY PROTEIN"/>
    <property type="match status" value="1"/>
</dbReference>
<dbReference type="Pfam" id="PF21982">
    <property type="entry name" value="RecX_HTH1"/>
    <property type="match status" value="1"/>
</dbReference>
<dbReference type="Pfam" id="PF21981">
    <property type="entry name" value="RecX_HTH3"/>
    <property type="match status" value="1"/>
</dbReference>
<keyword id="KW-0963">Cytoplasm</keyword>
<reference key="1">
    <citation type="journal article" date="2008" name="Antimicrob. Agents Chemother.">
        <title>Mutated response regulator graR is responsible for phenotypic conversion of Staphylococcus aureus from heterogeneous vancomycin-intermediate resistance to vancomycin-intermediate resistance.</title>
        <authorList>
            <person name="Neoh H.-M."/>
            <person name="Cui L."/>
            <person name="Yuzawa H."/>
            <person name="Takeuchi F."/>
            <person name="Matsuo M."/>
            <person name="Hiramatsu K."/>
        </authorList>
    </citation>
    <scope>NUCLEOTIDE SEQUENCE [LARGE SCALE GENOMIC DNA]</scope>
    <source>
        <strain>Mu3 / ATCC 700698</strain>
    </source>
</reference>
<comment type="function">
    <text evidence="1">Modulates RecA activity.</text>
</comment>
<comment type="subcellular location">
    <subcellularLocation>
        <location evidence="1">Cytoplasm</location>
    </subcellularLocation>
</comment>
<comment type="similarity">
    <text evidence="1">Belongs to the RecX family.</text>
</comment>
<accession>A7X3Z1</accession>
<evidence type="ECO:0000255" key="1">
    <source>
        <dbReference type="HAMAP-Rule" id="MF_01114"/>
    </source>
</evidence>
<name>RECX_STAA1</name>
<sequence length="272" mass="32259">MPKITKIEVQKKNKERFNLFLDEQFEMGIDIDTLVKFNLKKGQQLEAADMAEIQKYDHYRIGLNKAIQYLSYKKRTEKEVIQYLQKEEISEQAISEVIEYCYREKLIDHQDYAESLKNTMIRTTDKGPKIYQQKLYQLGIEPNIIEMFTELYREQQELDDIIQIAEKISKTKKGPQNKVKEKVMQSLIQKGFEMETIHAVLNEMDFTQDEAVLDDLLQRDLEKIYNKNRKKYTQQKLISKTIEGLMRKGYKYDKIKAKLEESGIADGTEEIE</sequence>
<protein>
    <recommendedName>
        <fullName evidence="1">Regulatory protein RecX</fullName>
    </recommendedName>
</protein>
<proteinExistence type="inferred from homology"/>